<protein>
    <recommendedName>
        <fullName evidence="1">Large ribosomal subunit protein bL36</fullName>
    </recommendedName>
    <alternativeName>
        <fullName evidence="2">50S ribosomal protein L36</fullName>
    </alternativeName>
</protein>
<comment type="similarity">
    <text evidence="1">Belongs to the bacterial ribosomal protein bL36 family.</text>
</comment>
<keyword id="KW-0687">Ribonucleoprotein</keyword>
<keyword id="KW-0689">Ribosomal protein</keyword>
<dbReference type="EMBL" id="CP000826">
    <property type="protein sequence ID" value="ABV40228.1"/>
    <property type="molecule type" value="Genomic_DNA"/>
</dbReference>
<dbReference type="SMR" id="A8GAT8"/>
<dbReference type="STRING" id="399741.Spro_1124"/>
<dbReference type="KEGG" id="spe:Spro_1124"/>
<dbReference type="eggNOG" id="COG0257">
    <property type="taxonomic scope" value="Bacteria"/>
</dbReference>
<dbReference type="HOGENOM" id="CLU_135723_3_1_6"/>
<dbReference type="OrthoDB" id="9801558at2"/>
<dbReference type="GO" id="GO:1990904">
    <property type="term" value="C:ribonucleoprotein complex"/>
    <property type="evidence" value="ECO:0007669"/>
    <property type="project" value="UniProtKB-KW"/>
</dbReference>
<dbReference type="GO" id="GO:0005840">
    <property type="term" value="C:ribosome"/>
    <property type="evidence" value="ECO:0007669"/>
    <property type="project" value="UniProtKB-KW"/>
</dbReference>
<dbReference type="GO" id="GO:0003735">
    <property type="term" value="F:structural constituent of ribosome"/>
    <property type="evidence" value="ECO:0007669"/>
    <property type="project" value="InterPro"/>
</dbReference>
<dbReference type="GO" id="GO:0006412">
    <property type="term" value="P:translation"/>
    <property type="evidence" value="ECO:0007669"/>
    <property type="project" value="UniProtKB-UniRule"/>
</dbReference>
<dbReference type="HAMAP" id="MF_00251">
    <property type="entry name" value="Ribosomal_bL36"/>
    <property type="match status" value="1"/>
</dbReference>
<dbReference type="InterPro" id="IPR000473">
    <property type="entry name" value="Ribosomal_bL36"/>
</dbReference>
<dbReference type="InterPro" id="IPR035977">
    <property type="entry name" value="Ribosomal_bL36_sp"/>
</dbReference>
<dbReference type="InterPro" id="IPR047621">
    <property type="entry name" value="Ribosomal_L36_bact"/>
</dbReference>
<dbReference type="NCBIfam" id="NF002021">
    <property type="entry name" value="PRK00831.1"/>
    <property type="match status" value="1"/>
</dbReference>
<dbReference type="NCBIfam" id="TIGR01022">
    <property type="entry name" value="rpmJ_bact"/>
    <property type="match status" value="1"/>
</dbReference>
<dbReference type="PANTHER" id="PTHR47781">
    <property type="entry name" value="50S RIBOSOMAL PROTEIN L36 2"/>
    <property type="match status" value="1"/>
</dbReference>
<dbReference type="PANTHER" id="PTHR47781:SF1">
    <property type="entry name" value="LARGE RIBOSOMAL SUBUNIT PROTEIN BL36B"/>
    <property type="match status" value="1"/>
</dbReference>
<dbReference type="Pfam" id="PF00444">
    <property type="entry name" value="Ribosomal_L36"/>
    <property type="match status" value="1"/>
</dbReference>
<dbReference type="SUPFAM" id="SSF57840">
    <property type="entry name" value="Ribosomal protein L36"/>
    <property type="match status" value="1"/>
</dbReference>
<dbReference type="PROSITE" id="PS00828">
    <property type="entry name" value="RIBOSOMAL_L36"/>
    <property type="match status" value="1"/>
</dbReference>
<accession>A8GAT8</accession>
<organism>
    <name type="scientific">Serratia proteamaculans (strain 568)</name>
    <dbReference type="NCBI Taxonomy" id="399741"/>
    <lineage>
        <taxon>Bacteria</taxon>
        <taxon>Pseudomonadati</taxon>
        <taxon>Pseudomonadota</taxon>
        <taxon>Gammaproteobacteria</taxon>
        <taxon>Enterobacterales</taxon>
        <taxon>Yersiniaceae</taxon>
        <taxon>Serratia</taxon>
    </lineage>
</organism>
<sequence length="46" mass="5439">MQVLSSLRSAKNRHPDCKVVRRKGRIYVICKTNPRFKAVQGRKKKR</sequence>
<gene>
    <name evidence="1" type="primary">rpmJ</name>
    <name type="ordered locus">Spro_1124</name>
</gene>
<evidence type="ECO:0000255" key="1">
    <source>
        <dbReference type="HAMAP-Rule" id="MF_00251"/>
    </source>
</evidence>
<evidence type="ECO:0000305" key="2"/>
<feature type="chain" id="PRO_1000059036" description="Large ribosomal subunit protein bL36">
    <location>
        <begin position="1"/>
        <end position="46"/>
    </location>
</feature>
<proteinExistence type="inferred from homology"/>
<reference key="1">
    <citation type="submission" date="2007-09" db="EMBL/GenBank/DDBJ databases">
        <title>Complete sequence of chromosome of Serratia proteamaculans 568.</title>
        <authorList>
            <consortium name="US DOE Joint Genome Institute"/>
            <person name="Copeland A."/>
            <person name="Lucas S."/>
            <person name="Lapidus A."/>
            <person name="Barry K."/>
            <person name="Glavina del Rio T."/>
            <person name="Dalin E."/>
            <person name="Tice H."/>
            <person name="Pitluck S."/>
            <person name="Chain P."/>
            <person name="Malfatti S."/>
            <person name="Shin M."/>
            <person name="Vergez L."/>
            <person name="Schmutz J."/>
            <person name="Larimer F."/>
            <person name="Land M."/>
            <person name="Hauser L."/>
            <person name="Kyrpides N."/>
            <person name="Kim E."/>
            <person name="Taghavi S."/>
            <person name="Newman L."/>
            <person name="Vangronsveld J."/>
            <person name="van der Lelie D."/>
            <person name="Richardson P."/>
        </authorList>
    </citation>
    <scope>NUCLEOTIDE SEQUENCE [LARGE SCALE GENOMIC DNA]</scope>
    <source>
        <strain>568</strain>
    </source>
</reference>
<name>RL36_SERP5</name>